<reference key="1">
    <citation type="submission" date="2002-07" db="EMBL/GenBank/DDBJ databases">
        <title>Full length cloning of DD1, a novel gene expressed in brain and in islets of Langerhans.</title>
        <authorList>
            <person name="Mas C."/>
            <person name="Meda P."/>
        </authorList>
    </citation>
    <scope>NUCLEOTIDE SEQUENCE [MRNA] (ISOFORM 1)</scope>
    <source>
        <strain>C57BL/6J</strain>
    </source>
</reference>
<reference key="2">
    <citation type="journal article" date="2005" name="Science">
        <title>The transcriptional landscape of the mammalian genome.</title>
        <authorList>
            <person name="Carninci P."/>
            <person name="Kasukawa T."/>
            <person name="Katayama S."/>
            <person name="Gough J."/>
            <person name="Frith M.C."/>
            <person name="Maeda N."/>
            <person name="Oyama R."/>
            <person name="Ravasi T."/>
            <person name="Lenhard B."/>
            <person name="Wells C."/>
            <person name="Kodzius R."/>
            <person name="Shimokawa K."/>
            <person name="Bajic V.B."/>
            <person name="Brenner S.E."/>
            <person name="Batalov S."/>
            <person name="Forrest A.R."/>
            <person name="Zavolan M."/>
            <person name="Davis M.J."/>
            <person name="Wilming L.G."/>
            <person name="Aidinis V."/>
            <person name="Allen J.E."/>
            <person name="Ambesi-Impiombato A."/>
            <person name="Apweiler R."/>
            <person name="Aturaliya R.N."/>
            <person name="Bailey T.L."/>
            <person name="Bansal M."/>
            <person name="Baxter L."/>
            <person name="Beisel K.W."/>
            <person name="Bersano T."/>
            <person name="Bono H."/>
            <person name="Chalk A.M."/>
            <person name="Chiu K.P."/>
            <person name="Choudhary V."/>
            <person name="Christoffels A."/>
            <person name="Clutterbuck D.R."/>
            <person name="Crowe M.L."/>
            <person name="Dalla E."/>
            <person name="Dalrymple B.P."/>
            <person name="de Bono B."/>
            <person name="Della Gatta G."/>
            <person name="di Bernardo D."/>
            <person name="Down T."/>
            <person name="Engstrom P."/>
            <person name="Fagiolini M."/>
            <person name="Faulkner G."/>
            <person name="Fletcher C.F."/>
            <person name="Fukushima T."/>
            <person name="Furuno M."/>
            <person name="Futaki S."/>
            <person name="Gariboldi M."/>
            <person name="Georgii-Hemming P."/>
            <person name="Gingeras T.R."/>
            <person name="Gojobori T."/>
            <person name="Green R.E."/>
            <person name="Gustincich S."/>
            <person name="Harbers M."/>
            <person name="Hayashi Y."/>
            <person name="Hensch T.K."/>
            <person name="Hirokawa N."/>
            <person name="Hill D."/>
            <person name="Huminiecki L."/>
            <person name="Iacono M."/>
            <person name="Ikeo K."/>
            <person name="Iwama A."/>
            <person name="Ishikawa T."/>
            <person name="Jakt M."/>
            <person name="Kanapin A."/>
            <person name="Katoh M."/>
            <person name="Kawasawa Y."/>
            <person name="Kelso J."/>
            <person name="Kitamura H."/>
            <person name="Kitano H."/>
            <person name="Kollias G."/>
            <person name="Krishnan S.P."/>
            <person name="Kruger A."/>
            <person name="Kummerfeld S.K."/>
            <person name="Kurochkin I.V."/>
            <person name="Lareau L.F."/>
            <person name="Lazarevic D."/>
            <person name="Lipovich L."/>
            <person name="Liu J."/>
            <person name="Liuni S."/>
            <person name="McWilliam S."/>
            <person name="Madan Babu M."/>
            <person name="Madera M."/>
            <person name="Marchionni L."/>
            <person name="Matsuda H."/>
            <person name="Matsuzawa S."/>
            <person name="Miki H."/>
            <person name="Mignone F."/>
            <person name="Miyake S."/>
            <person name="Morris K."/>
            <person name="Mottagui-Tabar S."/>
            <person name="Mulder N."/>
            <person name="Nakano N."/>
            <person name="Nakauchi H."/>
            <person name="Ng P."/>
            <person name="Nilsson R."/>
            <person name="Nishiguchi S."/>
            <person name="Nishikawa S."/>
            <person name="Nori F."/>
            <person name="Ohara O."/>
            <person name="Okazaki Y."/>
            <person name="Orlando V."/>
            <person name="Pang K.C."/>
            <person name="Pavan W.J."/>
            <person name="Pavesi G."/>
            <person name="Pesole G."/>
            <person name="Petrovsky N."/>
            <person name="Piazza S."/>
            <person name="Reed J."/>
            <person name="Reid J.F."/>
            <person name="Ring B.Z."/>
            <person name="Ringwald M."/>
            <person name="Rost B."/>
            <person name="Ruan Y."/>
            <person name="Salzberg S.L."/>
            <person name="Sandelin A."/>
            <person name="Schneider C."/>
            <person name="Schoenbach C."/>
            <person name="Sekiguchi K."/>
            <person name="Semple C.A."/>
            <person name="Seno S."/>
            <person name="Sessa L."/>
            <person name="Sheng Y."/>
            <person name="Shibata Y."/>
            <person name="Shimada H."/>
            <person name="Shimada K."/>
            <person name="Silva D."/>
            <person name="Sinclair B."/>
            <person name="Sperling S."/>
            <person name="Stupka E."/>
            <person name="Sugiura K."/>
            <person name="Sultana R."/>
            <person name="Takenaka Y."/>
            <person name="Taki K."/>
            <person name="Tammoja K."/>
            <person name="Tan S.L."/>
            <person name="Tang S."/>
            <person name="Taylor M.S."/>
            <person name="Tegner J."/>
            <person name="Teichmann S.A."/>
            <person name="Ueda H.R."/>
            <person name="van Nimwegen E."/>
            <person name="Verardo R."/>
            <person name="Wei C.L."/>
            <person name="Yagi K."/>
            <person name="Yamanishi H."/>
            <person name="Zabarovsky E."/>
            <person name="Zhu S."/>
            <person name="Zimmer A."/>
            <person name="Hide W."/>
            <person name="Bult C."/>
            <person name="Grimmond S.M."/>
            <person name="Teasdale R.D."/>
            <person name="Liu E.T."/>
            <person name="Brusic V."/>
            <person name="Quackenbush J."/>
            <person name="Wahlestedt C."/>
            <person name="Mattick J.S."/>
            <person name="Hume D.A."/>
            <person name="Kai C."/>
            <person name="Sasaki D."/>
            <person name="Tomaru Y."/>
            <person name="Fukuda S."/>
            <person name="Kanamori-Katayama M."/>
            <person name="Suzuki M."/>
            <person name="Aoki J."/>
            <person name="Arakawa T."/>
            <person name="Iida J."/>
            <person name="Imamura K."/>
            <person name="Itoh M."/>
            <person name="Kato T."/>
            <person name="Kawaji H."/>
            <person name="Kawagashira N."/>
            <person name="Kawashima T."/>
            <person name="Kojima M."/>
            <person name="Kondo S."/>
            <person name="Konno H."/>
            <person name="Nakano K."/>
            <person name="Ninomiya N."/>
            <person name="Nishio T."/>
            <person name="Okada M."/>
            <person name="Plessy C."/>
            <person name="Shibata K."/>
            <person name="Shiraki T."/>
            <person name="Suzuki S."/>
            <person name="Tagami M."/>
            <person name="Waki K."/>
            <person name="Watahiki A."/>
            <person name="Okamura-Oho Y."/>
            <person name="Suzuki H."/>
            <person name="Kawai J."/>
            <person name="Hayashizaki Y."/>
        </authorList>
    </citation>
    <scope>NUCLEOTIDE SEQUENCE [LARGE SCALE MRNA] (ISOFORM 1)</scope>
    <source>
        <strain>C57BL/6J</strain>
        <tissue>Cerebellum</tissue>
    </source>
</reference>
<reference key="3">
    <citation type="journal article" date="2004" name="DNA Res.">
        <title>Prediction of the coding sequences of mouse homologues of KIAA gene: IV. The complete nucleotide sequences of 500 mouse KIAA-homologous cDNAs identified by screening of terminal sequences of cDNA clones randomly sampled from size-fractionated libraries.</title>
        <authorList>
            <person name="Okazaki N."/>
            <person name="Kikuno R."/>
            <person name="Ohara R."/>
            <person name="Inamoto S."/>
            <person name="Koseki H."/>
            <person name="Hiraoka S."/>
            <person name="Saga Y."/>
            <person name="Seino S."/>
            <person name="Nishimura M."/>
            <person name="Kaisho T."/>
            <person name="Hoshino K."/>
            <person name="Kitamura H."/>
            <person name="Nagase T."/>
            <person name="Ohara O."/>
            <person name="Koga H."/>
        </authorList>
    </citation>
    <scope>NUCLEOTIDE SEQUENCE [LARGE SCALE MRNA] (ISOFORM 2)</scope>
    <source>
        <tissue>Fetal brain</tissue>
    </source>
</reference>
<reference key="4">
    <citation type="submission" date="2005-07" db="EMBL/GenBank/DDBJ databases">
        <authorList>
            <person name="Mural R.J."/>
            <person name="Adams M.D."/>
            <person name="Myers E.W."/>
            <person name="Smith H.O."/>
            <person name="Venter J.C."/>
        </authorList>
    </citation>
    <scope>NUCLEOTIDE SEQUENCE [LARGE SCALE GENOMIC DNA]</scope>
</reference>
<reference key="5">
    <citation type="journal article" date="2004" name="Genome Res.">
        <title>The status, quality, and expansion of the NIH full-length cDNA project: the Mammalian Gene Collection (MGC).</title>
        <authorList>
            <consortium name="The MGC Project Team"/>
        </authorList>
    </citation>
    <scope>NUCLEOTIDE SEQUENCE [LARGE SCALE MRNA]</scope>
</reference>
<reference key="6">
    <citation type="journal article" date="2010" name="Cell">
        <title>A tissue-specific atlas of mouse protein phosphorylation and expression.</title>
        <authorList>
            <person name="Huttlin E.L."/>
            <person name="Jedrychowski M.P."/>
            <person name="Elias J.E."/>
            <person name="Goswami T."/>
            <person name="Rad R."/>
            <person name="Beausoleil S.A."/>
            <person name="Villen J."/>
            <person name="Haas W."/>
            <person name="Sowa M.E."/>
            <person name="Gygi S.P."/>
        </authorList>
    </citation>
    <scope>PHOSPHORYLATION [LARGE SCALE ANALYSIS] AT SER-712</scope>
    <scope>IDENTIFICATION BY MASS SPECTROMETRY [LARGE SCALE ANALYSIS]</scope>
    <source>
        <tissue>Brain</tissue>
    </source>
</reference>
<evidence type="ECO:0000250" key="1">
    <source>
        <dbReference type="UniProtKB" id="D3ZJ47"/>
    </source>
</evidence>
<evidence type="ECO:0000250" key="2">
    <source>
        <dbReference type="UniProtKB" id="Q9UPX6"/>
    </source>
</evidence>
<evidence type="ECO:0000255" key="3"/>
<evidence type="ECO:0000256" key="4">
    <source>
        <dbReference type="SAM" id="MobiDB-lite"/>
    </source>
</evidence>
<evidence type="ECO:0000303" key="5">
    <source>
    </source>
</evidence>
<evidence type="ECO:0000305" key="6"/>
<evidence type="ECO:0007744" key="7">
    <source>
    </source>
</evidence>
<keyword id="KW-0025">Alternative splicing</keyword>
<keyword id="KW-0037">Angiogenesis</keyword>
<keyword id="KW-1003">Cell membrane</keyword>
<keyword id="KW-0472">Membrane</keyword>
<keyword id="KW-0597">Phosphoprotein</keyword>
<keyword id="KW-1185">Reference proteome</keyword>
<keyword id="KW-0812">Transmembrane</keyword>
<keyword id="KW-1133">Transmembrane helix</keyword>
<accession>Q8K3V7</accession>
<accession>Q14CG5</accession>
<accession>Q69ZS9</accession>
<sequence>MEANQEASLFLVKILEELDSKQNTVSYQDLCKSLCAQFDLSQLAKLRSVLFYTACLDPNFPATLFKDKMKCSVNNQQSKKIMVAADIVTIFNLIQMNGGTAKEKLPMSCHKVRKKEASFESCRSDTEVCSPTVCEPLNCELSERPFSRGYPTRQSSKCRKMDCKECPQFVPASEPNFLLGVSKEVKNRAASLDRLQALSPYSVASPQPCEMQRTYFPMNIENEPMSDQDSLPISQGIKETFISSEEPFVVQSCVQKRNIFKEDFHNLMTVSPSLVGTTNKAEEGHGEPQSQKELHKPPFFNHSFEMPYHNQYLNPVYSPIPDKRRAKHESLDDLQASTYFGPTPVMGTQDTRRCPGRSSKQTPWPAKSWSLNTEEVPDFERSFFNRNPSEEKLRYPNSGSQTPNFSGPDRHPVYLVPKDQQKVLPAGYAVKPNGLKSKEISSPVDLEKHEAVKKFKDKSISCTSGQHSSDTSSVGTQTEQHVLDPPKCKDLCTSGQAKYGDRHAMKQSDDDSEIVSDDISDIFRFLDDMSISGSTGVIQSSCYNSTGSLSQLHKSDCDSSPEHHLAKITNGVSSGKGDKCNRPENVHHSEEELKSSVCKLVLRIGEIERKLESLSGVREEISQVLGKLNKLDQKIQQPEKVNVQIDLNSLTSEAPSDDSASPRVFRAHSGSHGPKLENSPDWCCSDASGSNSESLRVKALKKSLFTRPSSRSLTEENSATESKIASISNSPRDWRTITYTNRMSLNEEEIKDAGPANNKDWHRKSKEADRQYDIPPQHRLPKQPKDGFLVEQVFSPHPYPTSLKGHMKSNPLYTDMRLTELAEVKRGQPSWTIEEYARNSGDKGKLTALDLQTQESLNPNNLEYWMEDIYTPGYDSLLKRKEAEFRRAKVCKIAALITAAACTVILVIVVPICTMKS</sequence>
<gene>
    <name type="primary">Minar1</name>
    <name type="synonym">Ubtor</name>
</gene>
<name>MNAR1_MOUSE</name>
<feature type="chain" id="PRO_0000157134" description="Major intrinsically disordered Notch2-binding receptor 1">
    <location>
        <begin position="1"/>
        <end position="917"/>
    </location>
</feature>
<feature type="topological domain" description="Cytoplasmic" evidence="6">
    <location>
        <begin position="1"/>
        <end position="892"/>
    </location>
</feature>
<feature type="transmembrane region" description="Helical" evidence="3">
    <location>
        <begin position="893"/>
        <end position="913"/>
    </location>
</feature>
<feature type="topological domain" description="Extracellular" evidence="6">
    <location>
        <begin position="914"/>
        <end position="917"/>
    </location>
</feature>
<feature type="region of interest" description="Disordered" evidence="4">
    <location>
        <begin position="337"/>
        <end position="367"/>
    </location>
</feature>
<feature type="region of interest" description="Disordered" evidence="4">
    <location>
        <begin position="388"/>
        <end position="410"/>
    </location>
</feature>
<feature type="region of interest" description="Disordered" evidence="4">
    <location>
        <begin position="461"/>
        <end position="483"/>
    </location>
</feature>
<feature type="region of interest" description="Disordered" evidence="4">
    <location>
        <begin position="568"/>
        <end position="588"/>
    </location>
</feature>
<feature type="region of interest" description="Disordered" evidence="4">
    <location>
        <begin position="652"/>
        <end position="687"/>
    </location>
</feature>
<feature type="region of interest" description="Disordered" evidence="4">
    <location>
        <begin position="706"/>
        <end position="727"/>
    </location>
</feature>
<feature type="region of interest" description="Disordered" evidence="4">
    <location>
        <begin position="746"/>
        <end position="783"/>
    </location>
</feature>
<feature type="compositionally biased region" description="Polar residues" evidence="4">
    <location>
        <begin position="461"/>
        <end position="480"/>
    </location>
</feature>
<feature type="compositionally biased region" description="Basic and acidic residues" evidence="4">
    <location>
        <begin position="576"/>
        <end position="588"/>
    </location>
</feature>
<feature type="modified residue" description="Phosphoserine" evidence="7">
    <location>
        <position position="712"/>
    </location>
</feature>
<feature type="splice variant" id="VSP_013706" description="In isoform 2." evidence="5">
    <location>
        <begin position="373"/>
        <end position="382"/>
    </location>
</feature>
<protein>
    <recommendedName>
        <fullName>Major intrinsically disordered Notch2-binding receptor 1</fullName>
    </recommendedName>
    <alternativeName>
        <fullName>Membrane integral NOTCH2-associated receptor 1</fullName>
    </alternativeName>
    <alternativeName>
        <fullName>Protein DD1</fullName>
    </alternativeName>
    <alternativeName>
        <fullName>Ubiquitination and mTOR signaling protein</fullName>
    </alternativeName>
</protein>
<organism>
    <name type="scientific">Mus musculus</name>
    <name type="common">Mouse</name>
    <dbReference type="NCBI Taxonomy" id="10090"/>
    <lineage>
        <taxon>Eukaryota</taxon>
        <taxon>Metazoa</taxon>
        <taxon>Chordata</taxon>
        <taxon>Craniata</taxon>
        <taxon>Vertebrata</taxon>
        <taxon>Euteleostomi</taxon>
        <taxon>Mammalia</taxon>
        <taxon>Eutheria</taxon>
        <taxon>Euarchontoglires</taxon>
        <taxon>Glires</taxon>
        <taxon>Rodentia</taxon>
        <taxon>Myomorpha</taxon>
        <taxon>Muroidea</taxon>
        <taxon>Muridae</taxon>
        <taxon>Murinae</taxon>
        <taxon>Mus</taxon>
        <taxon>Mus</taxon>
    </lineage>
</organism>
<proteinExistence type="evidence at protein level"/>
<comment type="function">
    <text evidence="1 2">Intrinsically disordered protein which may negatively regulate mTOR signaling pathway by stabilizing the mTOR complex component DEPTOR. Negatively regulates angiogenesis. Negatively regulates cell growth (By similarity). Negatively regulates neurite outgrowth in hippocampal neurons (By similarity).</text>
</comment>
<comment type="subunit">
    <text evidence="2">Interacts with NOTCH2; this interaction increases MINAR1 stability. Interacts (via N-terminus) with DEPTOR (via PDZ domain); this interaction may stabilize DEPTOR protein by impairing its ubiquitination.</text>
</comment>
<comment type="subcellular location">
    <subcellularLocation>
        <location evidence="2">Cell membrane</location>
        <topology evidence="2">Single-pass type IV membrane protein</topology>
    </subcellularLocation>
</comment>
<comment type="alternative products">
    <event type="alternative splicing"/>
    <isoform>
        <id>Q8K3V7-1</id>
        <name>1</name>
        <sequence type="displayed"/>
    </isoform>
    <isoform>
        <id>Q8K3V7-2</id>
        <name>2</name>
        <sequence type="described" ref="VSP_013706"/>
    </isoform>
</comment>
<comment type="tissue specificity">
    <text>Expressed in brain and in islets of Langerhans.</text>
</comment>
<comment type="similarity">
    <text evidence="6">Belongs to the MINAR family.</text>
</comment>
<comment type="caution">
    <text evidence="2">MINAR1 topology is a matter of debate, some authors think the N-terminus is extracellular, while preliminary experimental results suggest a cytosolic location.</text>
</comment>
<comment type="sequence caution" evidence="6">
    <conflict type="erroneous initiation">
        <sequence resource="EMBL-CDS" id="BAD32367"/>
    </conflict>
    <text>Extended N-terminus.</text>
</comment>
<dbReference type="EMBL" id="AF529169">
    <property type="protein sequence ID" value="AAM93262.1"/>
    <property type="molecule type" value="mRNA"/>
</dbReference>
<dbReference type="EMBL" id="AK035830">
    <property type="protein sequence ID" value="BAC29204.1"/>
    <property type="molecule type" value="mRNA"/>
</dbReference>
<dbReference type="EMBL" id="AK173089">
    <property type="protein sequence ID" value="BAD32367.1"/>
    <property type="status" value="ALT_INIT"/>
    <property type="molecule type" value="Transcribed_RNA"/>
</dbReference>
<dbReference type="EMBL" id="CH466560">
    <property type="protein sequence ID" value="EDL20893.1"/>
    <property type="molecule type" value="Genomic_DNA"/>
</dbReference>
<dbReference type="EMBL" id="BC113792">
    <property type="protein sequence ID" value="AAI13793.1"/>
    <property type="molecule type" value="mRNA"/>
</dbReference>
<dbReference type="CCDS" id="CCDS23395.1">
    <molecule id="Q8K3V7-1"/>
</dbReference>
<dbReference type="RefSeq" id="NP_705729.1">
    <molecule id="Q8K3V7-1"/>
    <property type="nucleotide sequence ID" value="NM_153509.2"/>
</dbReference>
<dbReference type="RefSeq" id="XP_006511020.1">
    <molecule id="Q8K3V7-1"/>
    <property type="nucleotide sequence ID" value="XM_006510957.5"/>
</dbReference>
<dbReference type="RefSeq" id="XP_017168754.1">
    <molecule id="Q8K3V7-1"/>
    <property type="nucleotide sequence ID" value="XM_017313265.2"/>
</dbReference>
<dbReference type="RefSeq" id="XP_036010669.1">
    <molecule id="Q8K3V7-1"/>
    <property type="nucleotide sequence ID" value="XM_036154776.1"/>
</dbReference>
<dbReference type="RefSeq" id="XP_036010670.1">
    <molecule id="Q8K3V7-1"/>
    <property type="nucleotide sequence ID" value="XM_036154777.1"/>
</dbReference>
<dbReference type="SMR" id="Q8K3V7"/>
<dbReference type="BioGRID" id="229106">
    <property type="interactions" value="1"/>
</dbReference>
<dbReference type="FunCoup" id="Q8K3V7">
    <property type="interactions" value="975"/>
</dbReference>
<dbReference type="STRING" id="10090.ENSMUSP00000046111"/>
<dbReference type="GlyGen" id="Q8K3V7">
    <property type="glycosylation" value="2 sites, 1 O-linked glycan (1 site)"/>
</dbReference>
<dbReference type="iPTMnet" id="Q8K3V7"/>
<dbReference type="PhosphoSitePlus" id="Q8K3V7"/>
<dbReference type="PaxDb" id="10090-ENSMUSP00000046111"/>
<dbReference type="ProteomicsDB" id="269041">
    <molecule id="Q8K3V7-1"/>
</dbReference>
<dbReference type="ProteomicsDB" id="269042">
    <molecule id="Q8K3V7-2"/>
</dbReference>
<dbReference type="Antibodypedia" id="2612">
    <property type="antibodies" value="26 antibodies from 13 providers"/>
</dbReference>
<dbReference type="DNASU" id="209743"/>
<dbReference type="Ensembl" id="ENSMUST00000044491.13">
    <molecule id="Q8K3V7-1"/>
    <property type="protein sequence ID" value="ENSMUSP00000046111.7"/>
    <property type="gene ID" value="ENSMUSG00000039313.15"/>
</dbReference>
<dbReference type="GeneID" id="209743"/>
<dbReference type="KEGG" id="mmu:209743"/>
<dbReference type="UCSC" id="uc009qzn.2">
    <molecule id="Q8K3V7-1"/>
    <property type="organism name" value="mouse"/>
</dbReference>
<dbReference type="AGR" id="MGI:2667167"/>
<dbReference type="CTD" id="23251"/>
<dbReference type="MGI" id="MGI:2667167">
    <property type="gene designation" value="Minar1"/>
</dbReference>
<dbReference type="VEuPathDB" id="HostDB:ENSMUSG00000039313"/>
<dbReference type="eggNOG" id="ENOG502QSCS">
    <property type="taxonomic scope" value="Eukaryota"/>
</dbReference>
<dbReference type="GeneTree" id="ENSGT00530000063851"/>
<dbReference type="HOGENOM" id="CLU_016692_0_0_1"/>
<dbReference type="InParanoid" id="Q8K3V7"/>
<dbReference type="OMA" id="IMQANYA"/>
<dbReference type="OrthoDB" id="8875526at2759"/>
<dbReference type="PhylomeDB" id="Q8K3V7"/>
<dbReference type="TreeFam" id="TF350677"/>
<dbReference type="BioGRID-ORCS" id="209743">
    <property type="hits" value="2 hits in 79 CRISPR screens"/>
</dbReference>
<dbReference type="ChiTaRS" id="Minar1">
    <property type="organism name" value="mouse"/>
</dbReference>
<dbReference type="PRO" id="PR:Q8K3V7"/>
<dbReference type="Proteomes" id="UP000000589">
    <property type="component" value="Chromosome 9"/>
</dbReference>
<dbReference type="RNAct" id="Q8K3V7">
    <property type="molecule type" value="protein"/>
</dbReference>
<dbReference type="Bgee" id="ENSMUSG00000039313">
    <property type="expression patterns" value="Expressed in habenula and 71 other cell types or tissues"/>
</dbReference>
<dbReference type="ExpressionAtlas" id="Q8K3V7">
    <property type="expression patterns" value="baseline and differential"/>
</dbReference>
<dbReference type="GO" id="GO:0005886">
    <property type="term" value="C:plasma membrane"/>
    <property type="evidence" value="ECO:0000250"/>
    <property type="project" value="UniProtKB"/>
</dbReference>
<dbReference type="GO" id="GO:0001525">
    <property type="term" value="P:angiogenesis"/>
    <property type="evidence" value="ECO:0007669"/>
    <property type="project" value="UniProtKB-KW"/>
</dbReference>
<dbReference type="GO" id="GO:0016525">
    <property type="term" value="P:negative regulation of angiogenesis"/>
    <property type="evidence" value="ECO:0000250"/>
    <property type="project" value="UniProtKB"/>
</dbReference>
<dbReference type="GO" id="GO:0030308">
    <property type="term" value="P:negative regulation of cell growth"/>
    <property type="evidence" value="ECO:0000250"/>
    <property type="project" value="UniProtKB"/>
</dbReference>
<dbReference type="GO" id="GO:0008285">
    <property type="term" value="P:negative regulation of cell population proliferation"/>
    <property type="evidence" value="ECO:0000250"/>
    <property type="project" value="UniProtKB"/>
</dbReference>
<dbReference type="GO" id="GO:0010977">
    <property type="term" value="P:negative regulation of neuron projection development"/>
    <property type="evidence" value="ECO:0000250"/>
    <property type="project" value="UniProtKB"/>
</dbReference>
<dbReference type="GO" id="GO:0031397">
    <property type="term" value="P:negative regulation of protein ubiquitination"/>
    <property type="evidence" value="ECO:0000250"/>
    <property type="project" value="UniProtKB"/>
</dbReference>
<dbReference type="GO" id="GO:0032007">
    <property type="term" value="P:negative regulation of TOR signaling"/>
    <property type="evidence" value="ECO:0000250"/>
    <property type="project" value="UniProtKB"/>
</dbReference>
<dbReference type="InterPro" id="IPR039706">
    <property type="entry name" value="MINAR1-like"/>
</dbReference>
<dbReference type="InterPro" id="IPR009626">
    <property type="entry name" value="MINAR1-like_C"/>
</dbReference>
<dbReference type="InterPro" id="IPR055117">
    <property type="entry name" value="MINAR1_N"/>
</dbReference>
<dbReference type="PANTHER" id="PTHR31530:SF2">
    <property type="entry name" value="MAJOR INTRINSICALLY DISORDERED NOTCH2-BINDING RECEPTOR 1"/>
    <property type="match status" value="1"/>
</dbReference>
<dbReference type="PANTHER" id="PTHR31530">
    <property type="entry name" value="MAJOR INTRINSICALLY DISORDERED NOTCH2-BINDING RECEPTOR 1 MINAR1 FAMILY MEMBER"/>
    <property type="match status" value="1"/>
</dbReference>
<dbReference type="Pfam" id="PF06789">
    <property type="entry name" value="MINAR1_C"/>
    <property type="match status" value="1"/>
</dbReference>
<dbReference type="Pfam" id="PF22948">
    <property type="entry name" value="MINAR1_N"/>
    <property type="match status" value="1"/>
</dbReference>